<feature type="chain" id="PRO_0000222275" description="Protein AV2">
    <location>
        <begin position="1"/>
        <end position="113"/>
    </location>
</feature>
<feature type="region of interest" description="Disordered" evidence="2">
    <location>
        <begin position="94"/>
        <end position="113"/>
    </location>
</feature>
<sequence>MWDPLVNEFPDSVHGLRCMLAIKYLQALEDTYEPSTLGHELVRDLVSVIRARNYVEATRRYHHFHSRIQGSSKTELRQPIQEPCYCPHCPRHKSKTGLGEQAHVQKAHDVQDV</sequence>
<reference key="1">
    <citation type="journal article" date="1983" name="Nature">
        <title>Nucleotide sequence of cassava latent virus DNA.</title>
        <authorList>
            <person name="Stanley J."/>
            <person name="Gay M.R."/>
        </authorList>
    </citation>
    <scope>NUCLEOTIDE SEQUENCE [GENOMIC DNA]</scope>
</reference>
<organism>
    <name type="scientific">African cassava mosaic virus (isolate West Kenyan 844)</name>
    <name type="common">ACMV</name>
    <name type="synonym">Cassava latent virus (isolate West Kenyan 844)</name>
    <dbReference type="NCBI Taxonomy" id="10818"/>
    <lineage>
        <taxon>Viruses</taxon>
        <taxon>Monodnaviria</taxon>
        <taxon>Shotokuvirae</taxon>
        <taxon>Cressdnaviricota</taxon>
        <taxon>Repensiviricetes</taxon>
        <taxon>Geplafuvirales</taxon>
        <taxon>Geminiviridae</taxon>
        <taxon>Begomovirus</taxon>
        <taxon>Begomovirus manihotis</taxon>
    </lineage>
</organism>
<name>AV2_CLVK</name>
<evidence type="ECO:0000250" key="1"/>
<evidence type="ECO:0000256" key="2">
    <source>
        <dbReference type="SAM" id="MobiDB-lite"/>
    </source>
</evidence>
<evidence type="ECO:0000305" key="3"/>
<organismHost>
    <name type="scientific">Hewittia sublobata</name>
    <dbReference type="NCBI Taxonomy" id="197394"/>
</organismHost>
<organismHost>
    <name type="scientific">Jatropha multifida</name>
    <name type="common">Coralbush</name>
    <dbReference type="NCBI Taxonomy" id="3996"/>
</organismHost>
<organismHost>
    <name type="scientific">Laportea</name>
    <dbReference type="NCBI Taxonomy" id="194268"/>
</organismHost>
<organismHost>
    <name type="scientific">Manihot esculenta</name>
    <name type="common">Cassava</name>
    <name type="synonym">Jatropha manihot</name>
    <dbReference type="NCBI Taxonomy" id="3983"/>
</organismHost>
<protein>
    <recommendedName>
        <fullName>Protein AV2</fullName>
    </recommendedName>
</protein>
<dbReference type="EMBL" id="J02057">
    <property type="status" value="NOT_ANNOTATED_CDS"/>
    <property type="molecule type" value="Genomic_DNA"/>
</dbReference>
<dbReference type="Proteomes" id="UP000008452">
    <property type="component" value="Genome"/>
</dbReference>
<dbReference type="GO" id="GO:0044220">
    <property type="term" value="C:host cell perinuclear region of cytoplasm"/>
    <property type="evidence" value="ECO:0007669"/>
    <property type="project" value="UniProtKB-SubCell"/>
</dbReference>
<dbReference type="GO" id="GO:0060967">
    <property type="term" value="P:negative regulation of gene silencing by regulatory ncRNA"/>
    <property type="evidence" value="ECO:0007669"/>
    <property type="project" value="InterPro"/>
</dbReference>
<dbReference type="GO" id="GO:0052170">
    <property type="term" value="P:symbiont-mediated suppression of host innate immune response"/>
    <property type="evidence" value="ECO:0007669"/>
    <property type="project" value="UniProtKB-KW"/>
</dbReference>
<dbReference type="InterPro" id="IPR002511">
    <property type="entry name" value="Gemini_V2"/>
</dbReference>
<dbReference type="InterPro" id="IPR005159">
    <property type="entry name" value="WCCH"/>
</dbReference>
<dbReference type="Pfam" id="PF01524">
    <property type="entry name" value="Gemini_V2"/>
    <property type="match status" value="1"/>
</dbReference>
<dbReference type="Pfam" id="PF03716">
    <property type="entry name" value="WCCH"/>
    <property type="match status" value="1"/>
</dbReference>
<accession>P14975</accession>
<comment type="function">
    <text evidence="1">Through its interaction with host SGS3, acts as a suppressor of RNA-mediated gene silencing, also known as post-transcriptional gene silencing (PTGS), a mechanism of plant viral defense that limits the accumulation of viral RNAs.</text>
</comment>
<comment type="subunit">
    <text evidence="1">Interacts with host SGS3.</text>
</comment>
<comment type="subcellular location">
    <subcellularLocation>
        <location evidence="1">Host cytoplasm</location>
        <location evidence="1">Host perinuclear region</location>
    </subcellularLocation>
    <text evidence="1">Accumulates in inclusion bodies in the cell periphery. May interact with the ER network from the perinuclear region out to the cell periphery (By similarity).</text>
</comment>
<comment type="similarity">
    <text evidence="3">Belongs to the geminiviridae protein AV2/V2 family.</text>
</comment>
<keyword id="KW-1035">Host cytoplasm</keyword>
<keyword id="KW-0945">Host-virus interaction</keyword>
<keyword id="KW-1090">Inhibition of host innate immune response by virus</keyword>
<keyword id="KW-0941">Suppressor of RNA silencing</keyword>
<keyword id="KW-0899">Viral immunoevasion</keyword>
<proteinExistence type="inferred from homology"/>